<dbReference type="EC" id="3.1.26.3" evidence="1"/>
<dbReference type="EMBL" id="AE000511">
    <property type="protein sequence ID" value="AAD07725.1"/>
    <property type="status" value="ALT_INIT"/>
    <property type="molecule type" value="Genomic_DNA"/>
</dbReference>
<dbReference type="PIR" id="F64602">
    <property type="entry name" value="F64602"/>
</dbReference>
<dbReference type="RefSeq" id="NP_207456.1">
    <property type="nucleotide sequence ID" value="NC_000915.1"/>
</dbReference>
<dbReference type="RefSeq" id="WP_015056054.1">
    <property type="nucleotide sequence ID" value="NC_018939.1"/>
</dbReference>
<dbReference type="SMR" id="P56118"/>
<dbReference type="FunCoup" id="P56118">
    <property type="interactions" value="330"/>
</dbReference>
<dbReference type="IntAct" id="P56118">
    <property type="interactions" value="3"/>
</dbReference>
<dbReference type="MINT" id="P56118"/>
<dbReference type="STRING" id="85962.HP_0662"/>
<dbReference type="PaxDb" id="85962-C694_03425"/>
<dbReference type="EnsemblBacteria" id="AAD07725">
    <property type="protein sequence ID" value="AAD07725"/>
    <property type="gene ID" value="HP_0662"/>
</dbReference>
<dbReference type="KEGG" id="heo:C694_03425"/>
<dbReference type="KEGG" id="hpy:HP_0662"/>
<dbReference type="PATRIC" id="fig|85962.47.peg.712"/>
<dbReference type="eggNOG" id="COG0571">
    <property type="taxonomic scope" value="Bacteria"/>
</dbReference>
<dbReference type="InParanoid" id="P56118"/>
<dbReference type="OrthoDB" id="9805026at2"/>
<dbReference type="PhylomeDB" id="P56118"/>
<dbReference type="Proteomes" id="UP000000429">
    <property type="component" value="Chromosome"/>
</dbReference>
<dbReference type="GO" id="GO:0005829">
    <property type="term" value="C:cytosol"/>
    <property type="evidence" value="ECO:0000318"/>
    <property type="project" value="GO_Central"/>
</dbReference>
<dbReference type="GO" id="GO:0003725">
    <property type="term" value="F:double-stranded RNA binding"/>
    <property type="evidence" value="ECO:0000318"/>
    <property type="project" value="GO_Central"/>
</dbReference>
<dbReference type="GO" id="GO:0046872">
    <property type="term" value="F:metal ion binding"/>
    <property type="evidence" value="ECO:0007669"/>
    <property type="project" value="UniProtKB-KW"/>
</dbReference>
<dbReference type="GO" id="GO:0004525">
    <property type="term" value="F:ribonuclease III activity"/>
    <property type="evidence" value="ECO:0000318"/>
    <property type="project" value="GO_Central"/>
</dbReference>
<dbReference type="GO" id="GO:0019843">
    <property type="term" value="F:rRNA binding"/>
    <property type="evidence" value="ECO:0007669"/>
    <property type="project" value="UniProtKB-KW"/>
</dbReference>
<dbReference type="GO" id="GO:0006397">
    <property type="term" value="P:mRNA processing"/>
    <property type="evidence" value="ECO:0007669"/>
    <property type="project" value="UniProtKB-UniRule"/>
</dbReference>
<dbReference type="GO" id="GO:0010468">
    <property type="term" value="P:regulation of gene expression"/>
    <property type="evidence" value="ECO:0000318"/>
    <property type="project" value="GO_Central"/>
</dbReference>
<dbReference type="GO" id="GO:0006396">
    <property type="term" value="P:RNA processing"/>
    <property type="evidence" value="ECO:0000318"/>
    <property type="project" value="GO_Central"/>
</dbReference>
<dbReference type="GO" id="GO:0006364">
    <property type="term" value="P:rRNA processing"/>
    <property type="evidence" value="ECO:0007669"/>
    <property type="project" value="UniProtKB-UniRule"/>
</dbReference>
<dbReference type="GO" id="GO:0008033">
    <property type="term" value="P:tRNA processing"/>
    <property type="evidence" value="ECO:0007669"/>
    <property type="project" value="UniProtKB-KW"/>
</dbReference>
<dbReference type="CDD" id="cd10845">
    <property type="entry name" value="DSRM_RNAse_III_family"/>
    <property type="match status" value="1"/>
</dbReference>
<dbReference type="CDD" id="cd00593">
    <property type="entry name" value="RIBOc"/>
    <property type="match status" value="1"/>
</dbReference>
<dbReference type="FunFam" id="1.10.1520.10:FF:000001">
    <property type="entry name" value="Ribonuclease 3"/>
    <property type="match status" value="1"/>
</dbReference>
<dbReference type="FunFam" id="3.30.160.20:FF:000003">
    <property type="entry name" value="Ribonuclease 3"/>
    <property type="match status" value="1"/>
</dbReference>
<dbReference type="Gene3D" id="3.30.160.20">
    <property type="match status" value="1"/>
</dbReference>
<dbReference type="Gene3D" id="1.10.1520.10">
    <property type="entry name" value="Ribonuclease III domain"/>
    <property type="match status" value="1"/>
</dbReference>
<dbReference type="HAMAP" id="MF_00104">
    <property type="entry name" value="RNase_III"/>
    <property type="match status" value="1"/>
</dbReference>
<dbReference type="InterPro" id="IPR014720">
    <property type="entry name" value="dsRBD_dom"/>
</dbReference>
<dbReference type="InterPro" id="IPR011907">
    <property type="entry name" value="RNase_III"/>
</dbReference>
<dbReference type="InterPro" id="IPR000999">
    <property type="entry name" value="RNase_III_dom"/>
</dbReference>
<dbReference type="InterPro" id="IPR036389">
    <property type="entry name" value="RNase_III_sf"/>
</dbReference>
<dbReference type="NCBIfam" id="TIGR02191">
    <property type="entry name" value="RNaseIII"/>
    <property type="match status" value="1"/>
</dbReference>
<dbReference type="PANTHER" id="PTHR11207:SF0">
    <property type="entry name" value="RIBONUCLEASE 3"/>
    <property type="match status" value="1"/>
</dbReference>
<dbReference type="PANTHER" id="PTHR11207">
    <property type="entry name" value="RIBONUCLEASE III"/>
    <property type="match status" value="1"/>
</dbReference>
<dbReference type="Pfam" id="PF00035">
    <property type="entry name" value="dsrm"/>
    <property type="match status" value="1"/>
</dbReference>
<dbReference type="Pfam" id="PF14622">
    <property type="entry name" value="Ribonucleas_3_3"/>
    <property type="match status" value="1"/>
</dbReference>
<dbReference type="SMART" id="SM00358">
    <property type="entry name" value="DSRM"/>
    <property type="match status" value="1"/>
</dbReference>
<dbReference type="SMART" id="SM00535">
    <property type="entry name" value="RIBOc"/>
    <property type="match status" value="1"/>
</dbReference>
<dbReference type="SUPFAM" id="SSF54768">
    <property type="entry name" value="dsRNA-binding domain-like"/>
    <property type="match status" value="1"/>
</dbReference>
<dbReference type="SUPFAM" id="SSF69065">
    <property type="entry name" value="RNase III domain-like"/>
    <property type="match status" value="1"/>
</dbReference>
<dbReference type="PROSITE" id="PS50137">
    <property type="entry name" value="DS_RBD"/>
    <property type="match status" value="1"/>
</dbReference>
<dbReference type="PROSITE" id="PS00517">
    <property type="entry name" value="RNASE_3_1"/>
    <property type="match status" value="1"/>
</dbReference>
<dbReference type="PROSITE" id="PS50142">
    <property type="entry name" value="RNASE_3_2"/>
    <property type="match status" value="1"/>
</dbReference>
<name>RNC_HELPY</name>
<protein>
    <recommendedName>
        <fullName evidence="1">Ribonuclease 3</fullName>
        <ecNumber evidence="1">3.1.26.3</ecNumber>
    </recommendedName>
    <alternativeName>
        <fullName evidence="1">Ribonuclease III</fullName>
        <shortName evidence="1">RNase III</shortName>
    </alternativeName>
</protein>
<organism>
    <name type="scientific">Helicobacter pylori (strain ATCC 700392 / 26695)</name>
    <name type="common">Campylobacter pylori</name>
    <dbReference type="NCBI Taxonomy" id="85962"/>
    <lineage>
        <taxon>Bacteria</taxon>
        <taxon>Pseudomonadati</taxon>
        <taxon>Campylobacterota</taxon>
        <taxon>Epsilonproteobacteria</taxon>
        <taxon>Campylobacterales</taxon>
        <taxon>Helicobacteraceae</taxon>
        <taxon>Helicobacter</taxon>
    </lineage>
</organism>
<reference key="1">
    <citation type="journal article" date="1997" name="Nature">
        <title>The complete genome sequence of the gastric pathogen Helicobacter pylori.</title>
        <authorList>
            <person name="Tomb J.-F."/>
            <person name="White O."/>
            <person name="Kerlavage A.R."/>
            <person name="Clayton R.A."/>
            <person name="Sutton G.G."/>
            <person name="Fleischmann R.D."/>
            <person name="Ketchum K.A."/>
            <person name="Klenk H.-P."/>
            <person name="Gill S.R."/>
            <person name="Dougherty B.A."/>
            <person name="Nelson K.E."/>
            <person name="Quackenbush J."/>
            <person name="Zhou L."/>
            <person name="Kirkness E.F."/>
            <person name="Peterson S.N."/>
            <person name="Loftus B.J."/>
            <person name="Richardson D.L."/>
            <person name="Dodson R.J."/>
            <person name="Khalak H.G."/>
            <person name="Glodek A."/>
            <person name="McKenney K."/>
            <person name="FitzGerald L.M."/>
            <person name="Lee N."/>
            <person name="Adams M.D."/>
            <person name="Hickey E.K."/>
            <person name="Berg D.E."/>
            <person name="Gocayne J.D."/>
            <person name="Utterback T.R."/>
            <person name="Peterson J.D."/>
            <person name="Kelley J.M."/>
            <person name="Cotton M.D."/>
            <person name="Weidman J.F."/>
            <person name="Fujii C."/>
            <person name="Bowman C."/>
            <person name="Watthey L."/>
            <person name="Wallin E."/>
            <person name="Hayes W.S."/>
            <person name="Borodovsky M."/>
            <person name="Karp P.D."/>
            <person name="Smith H.O."/>
            <person name="Fraser C.M."/>
            <person name="Venter J.C."/>
        </authorList>
    </citation>
    <scope>NUCLEOTIDE SEQUENCE [LARGE SCALE GENOMIC DNA]</scope>
    <source>
        <strain>ATCC 700392 / 26695</strain>
    </source>
</reference>
<feature type="chain" id="PRO_0000180401" description="Ribonuclease 3">
    <location>
        <begin position="1"/>
        <end position="239"/>
    </location>
</feature>
<feature type="domain" description="RNase III" evidence="1">
    <location>
        <begin position="18"/>
        <end position="141"/>
    </location>
</feature>
<feature type="domain" description="DRBM" evidence="1">
    <location>
        <begin position="168"/>
        <end position="237"/>
    </location>
</feature>
<feature type="active site" evidence="1">
    <location>
        <position position="58"/>
    </location>
</feature>
<feature type="active site" evidence="1">
    <location>
        <position position="130"/>
    </location>
</feature>
<feature type="binding site" evidence="1">
    <location>
        <position position="54"/>
    </location>
    <ligand>
        <name>Mg(2+)</name>
        <dbReference type="ChEBI" id="CHEBI:18420"/>
    </ligand>
</feature>
<feature type="binding site" evidence="1">
    <location>
        <position position="127"/>
    </location>
    <ligand>
        <name>Mg(2+)</name>
        <dbReference type="ChEBI" id="CHEBI:18420"/>
    </ligand>
</feature>
<feature type="binding site" evidence="1">
    <location>
        <position position="130"/>
    </location>
    <ligand>
        <name>Mg(2+)</name>
        <dbReference type="ChEBI" id="CHEBI:18420"/>
    </ligand>
</feature>
<sequence length="239" mass="27215">MKNKRSQNSPYITPNSSYTTLEKALGYSFKDKRLLEQALTHKSCKLALNNERLEFLGDAVLGLVIGELLYHKFYQYDEGKLSKLRASIVSAHGFTKLAKAIALQDYLRVSSSEEISNGREKPSILSSAFEALMAGVYLEAGLAKVQKIMQNLLNRAYKRLDLEHLFMDYKTALQELTQAQFCVIPTYQLLKEKGPDHHKEFEMALYIQDKMYATAKGKSKKEAEQQCAYQALQKLKEAK</sequence>
<evidence type="ECO:0000255" key="1">
    <source>
        <dbReference type="HAMAP-Rule" id="MF_00104"/>
    </source>
</evidence>
<evidence type="ECO:0000305" key="2"/>
<keyword id="KW-0963">Cytoplasm</keyword>
<keyword id="KW-0255">Endonuclease</keyword>
<keyword id="KW-0378">Hydrolase</keyword>
<keyword id="KW-0460">Magnesium</keyword>
<keyword id="KW-0479">Metal-binding</keyword>
<keyword id="KW-0507">mRNA processing</keyword>
<keyword id="KW-0540">Nuclease</keyword>
<keyword id="KW-1185">Reference proteome</keyword>
<keyword id="KW-0694">RNA-binding</keyword>
<keyword id="KW-0698">rRNA processing</keyword>
<keyword id="KW-0699">rRNA-binding</keyword>
<keyword id="KW-0819">tRNA processing</keyword>
<proteinExistence type="inferred from homology"/>
<gene>
    <name evidence="1" type="primary">rnc</name>
    <name type="ordered locus">HP_0662</name>
</gene>
<comment type="function">
    <text evidence="1">Digests double-stranded RNA. Involved in the processing of primary rRNA transcript to yield the immediate precursors to the large and small rRNAs (23S and 16S). Processes some mRNAs, and tRNAs when they are encoded in the rRNA operon. Processes pre-crRNA and tracrRNA of type II CRISPR loci if present in the organism.</text>
</comment>
<comment type="catalytic activity">
    <reaction evidence="1">
        <text>Endonucleolytic cleavage to 5'-phosphomonoester.</text>
        <dbReference type="EC" id="3.1.26.3"/>
    </reaction>
</comment>
<comment type="cofactor">
    <cofactor evidence="1">
        <name>Mg(2+)</name>
        <dbReference type="ChEBI" id="CHEBI:18420"/>
    </cofactor>
</comment>
<comment type="subunit">
    <text evidence="1">Homodimer.</text>
</comment>
<comment type="subcellular location">
    <subcellularLocation>
        <location evidence="1">Cytoplasm</location>
    </subcellularLocation>
</comment>
<comment type="similarity">
    <text evidence="1">Belongs to the ribonuclease III family.</text>
</comment>
<comment type="sequence caution" evidence="2">
    <conflict type="erroneous initiation">
        <sequence resource="EMBL-CDS" id="AAD07725"/>
    </conflict>
    <text>Extended N-terminus.</text>
</comment>
<accession>P56118</accession>